<evidence type="ECO:0000255" key="1">
    <source>
        <dbReference type="HAMAP-Rule" id="MF_00340"/>
    </source>
</evidence>
<evidence type="ECO:0000305" key="2"/>
<protein>
    <recommendedName>
        <fullName evidence="1">Large ribosomal subunit protein bL32</fullName>
    </recommendedName>
    <alternativeName>
        <fullName evidence="2">50S ribosomal protein L32</fullName>
    </alternativeName>
</protein>
<organism>
    <name type="scientific">Polynucleobacter necessarius subsp. necessarius (strain STIR1)</name>
    <dbReference type="NCBI Taxonomy" id="452638"/>
    <lineage>
        <taxon>Bacteria</taxon>
        <taxon>Pseudomonadati</taxon>
        <taxon>Pseudomonadota</taxon>
        <taxon>Betaproteobacteria</taxon>
        <taxon>Burkholderiales</taxon>
        <taxon>Burkholderiaceae</taxon>
        <taxon>Polynucleobacter</taxon>
    </lineage>
</organism>
<reference key="1">
    <citation type="journal article" date="2013" name="Proc. Natl. Acad. Sci. U.S.A.">
        <title>Polynucleobacter necessarius, a model for genome reduction in both free-living and symbiotic bacteria.</title>
        <authorList>
            <person name="Boscaro V."/>
            <person name="Felletti M."/>
            <person name="Vannini C."/>
            <person name="Ackerman M.S."/>
            <person name="Chain P.S."/>
            <person name="Malfatti S."/>
            <person name="Vergez L.M."/>
            <person name="Shin M."/>
            <person name="Doak T.G."/>
            <person name="Lynch M."/>
            <person name="Petroni G."/>
        </authorList>
    </citation>
    <scope>NUCLEOTIDE SEQUENCE [LARGE SCALE GENOMIC DNA]</scope>
    <source>
        <strain>STIR1</strain>
    </source>
</reference>
<comment type="similarity">
    <text evidence="1">Belongs to the bacterial ribosomal protein bL32 family.</text>
</comment>
<feature type="chain" id="PRO_1000120156" description="Large ribosomal subunit protein bL32">
    <location>
        <begin position="1"/>
        <end position="59"/>
    </location>
</feature>
<accession>B1XTK4</accession>
<gene>
    <name evidence="1" type="primary">rpmF</name>
    <name type="ordered locus">Pnec_0403</name>
</gene>
<dbReference type="EMBL" id="CP001010">
    <property type="protein sequence ID" value="ACB43681.1"/>
    <property type="molecule type" value="Genomic_DNA"/>
</dbReference>
<dbReference type="SMR" id="B1XTK4"/>
<dbReference type="STRING" id="452638.Pnec_0403"/>
<dbReference type="KEGG" id="pne:Pnec_0403"/>
<dbReference type="eggNOG" id="COG0333">
    <property type="taxonomic scope" value="Bacteria"/>
</dbReference>
<dbReference type="HOGENOM" id="CLU_129084_2_1_4"/>
<dbReference type="OrthoDB" id="9801927at2"/>
<dbReference type="GO" id="GO:0015934">
    <property type="term" value="C:large ribosomal subunit"/>
    <property type="evidence" value="ECO:0007669"/>
    <property type="project" value="InterPro"/>
</dbReference>
<dbReference type="GO" id="GO:0003735">
    <property type="term" value="F:structural constituent of ribosome"/>
    <property type="evidence" value="ECO:0007669"/>
    <property type="project" value="InterPro"/>
</dbReference>
<dbReference type="GO" id="GO:0006412">
    <property type="term" value="P:translation"/>
    <property type="evidence" value="ECO:0007669"/>
    <property type="project" value="UniProtKB-UniRule"/>
</dbReference>
<dbReference type="HAMAP" id="MF_00340">
    <property type="entry name" value="Ribosomal_bL32"/>
    <property type="match status" value="1"/>
</dbReference>
<dbReference type="InterPro" id="IPR002677">
    <property type="entry name" value="Ribosomal_bL32"/>
</dbReference>
<dbReference type="InterPro" id="IPR044957">
    <property type="entry name" value="Ribosomal_bL32_bact"/>
</dbReference>
<dbReference type="InterPro" id="IPR011332">
    <property type="entry name" value="Ribosomal_zn-bd"/>
</dbReference>
<dbReference type="NCBIfam" id="TIGR01031">
    <property type="entry name" value="rpmF_bact"/>
    <property type="match status" value="1"/>
</dbReference>
<dbReference type="PANTHER" id="PTHR35534">
    <property type="entry name" value="50S RIBOSOMAL PROTEIN L32"/>
    <property type="match status" value="1"/>
</dbReference>
<dbReference type="PANTHER" id="PTHR35534:SF1">
    <property type="entry name" value="LARGE RIBOSOMAL SUBUNIT PROTEIN BL32"/>
    <property type="match status" value="1"/>
</dbReference>
<dbReference type="Pfam" id="PF01783">
    <property type="entry name" value="Ribosomal_L32p"/>
    <property type="match status" value="1"/>
</dbReference>
<dbReference type="SUPFAM" id="SSF57829">
    <property type="entry name" value="Zn-binding ribosomal proteins"/>
    <property type="match status" value="1"/>
</dbReference>
<name>RL32_POLNS</name>
<keyword id="KW-0687">Ribonucleoprotein</keyword>
<keyword id="KW-0689">Ribosomal protein</keyword>
<proteinExistence type="inferred from homology"/>
<sequence>MAVQQNKKSPSKRDMHRAHDFLTAPATAVEATTGEAHLRHHISPNGYYRGRKVVKTNND</sequence>